<reference key="1">
    <citation type="journal article" date="2000" name="Cytogenet. Cell Genet.">
        <title>Isolation and characterization of a novel human gene, NIF3L1, and its mouse ortholog, Nif3l1, highly conserved from bacteria to mammals.</title>
        <authorList>
            <person name="Tascou S."/>
            <person name="Uedelhoven J."/>
            <person name="Dixkens C."/>
            <person name="Nayernia K."/>
            <person name="Engel W."/>
            <person name="Burfeind P."/>
        </authorList>
    </citation>
    <scope>NUCLEOTIDE SEQUENCE [MRNA] (ISOFORM 1)</scope>
    <scope>SUBCELLULAR LOCATION</scope>
</reference>
<reference key="2">
    <citation type="journal article" date="2001" name="Genomics">
        <title>Cloning and characterization of three novel genes, ALS2CR1, ALS2CR2, and ALS2CR3, in the juvenile amyotrophic lateral sclerosis (ALS2) critical region at chromosome 2q33-q34: candidate genes for ALS2.</title>
        <authorList>
            <person name="Hadano S."/>
            <person name="Yanagisawa Y."/>
            <person name="Skaug J."/>
            <person name="Fichter K."/>
            <person name="Nasir J."/>
            <person name="Martindale D."/>
            <person name="Koop B.F."/>
            <person name="Scherer S.W."/>
            <person name="Nicholson D.W."/>
            <person name="Rouleau G.A."/>
            <person name="Ikeda J.-E."/>
            <person name="Hayden M.R."/>
        </authorList>
    </citation>
    <scope>NUCLEOTIDE SEQUENCE [MRNA] (ISOFORM 2)</scope>
</reference>
<reference key="3">
    <citation type="submission" date="2003-03" db="EMBL/GenBank/DDBJ databases">
        <title>NIF3L1 interacts with WBSCR14.</title>
        <authorList>
            <person name="Merla G."/>
            <person name="Reymond A."/>
        </authorList>
    </citation>
    <scope>NUCLEOTIDE SEQUENCE [MRNA] (ISOFORM 3)</scope>
</reference>
<reference key="4">
    <citation type="submission" date="1998-04" db="EMBL/GenBank/DDBJ databases">
        <authorList>
            <person name="Mao Y.M."/>
            <person name="Xie Y."/>
            <person name="Huang X.Y."/>
            <person name="Ying K."/>
            <person name="Dai J.L."/>
        </authorList>
    </citation>
    <scope>NUCLEOTIDE SEQUENCE [LARGE SCALE MRNA] (ISOFORM 2)</scope>
    <source>
        <tissue>Fetal brain</tissue>
    </source>
</reference>
<reference key="5">
    <citation type="submission" date="1999-09" db="EMBL/GenBank/DDBJ databases">
        <title>Novel genes expressed in hematopoietic stem/progenitor cells from myelodysplastic syndrome patients.</title>
        <authorList>
            <person name="Huang C."/>
            <person name="Qian B."/>
            <person name="Tu Y."/>
            <person name="Gu W."/>
            <person name="Wang Y."/>
            <person name="Han Z."/>
            <person name="Chen Z."/>
        </authorList>
    </citation>
    <scope>NUCLEOTIDE SEQUENCE [LARGE SCALE MRNA] (ISOFORM 2)</scope>
    <source>
        <tissue>Hematopoietic stem cell</tissue>
    </source>
</reference>
<reference key="6">
    <citation type="journal article" date="2004" name="Nat. Genet.">
        <title>Complete sequencing and characterization of 21,243 full-length human cDNAs.</title>
        <authorList>
            <person name="Ota T."/>
            <person name="Suzuki Y."/>
            <person name="Nishikawa T."/>
            <person name="Otsuki T."/>
            <person name="Sugiyama T."/>
            <person name="Irie R."/>
            <person name="Wakamatsu A."/>
            <person name="Hayashi K."/>
            <person name="Sato H."/>
            <person name="Nagai K."/>
            <person name="Kimura K."/>
            <person name="Makita H."/>
            <person name="Sekine M."/>
            <person name="Obayashi M."/>
            <person name="Nishi T."/>
            <person name="Shibahara T."/>
            <person name="Tanaka T."/>
            <person name="Ishii S."/>
            <person name="Yamamoto J."/>
            <person name="Saito K."/>
            <person name="Kawai Y."/>
            <person name="Isono Y."/>
            <person name="Nakamura Y."/>
            <person name="Nagahari K."/>
            <person name="Murakami K."/>
            <person name="Yasuda T."/>
            <person name="Iwayanagi T."/>
            <person name="Wagatsuma M."/>
            <person name="Shiratori A."/>
            <person name="Sudo H."/>
            <person name="Hosoiri T."/>
            <person name="Kaku Y."/>
            <person name="Kodaira H."/>
            <person name="Kondo H."/>
            <person name="Sugawara M."/>
            <person name="Takahashi M."/>
            <person name="Kanda K."/>
            <person name="Yokoi T."/>
            <person name="Furuya T."/>
            <person name="Kikkawa E."/>
            <person name="Omura Y."/>
            <person name="Abe K."/>
            <person name="Kamihara K."/>
            <person name="Katsuta N."/>
            <person name="Sato K."/>
            <person name="Tanikawa M."/>
            <person name="Yamazaki M."/>
            <person name="Ninomiya K."/>
            <person name="Ishibashi T."/>
            <person name="Yamashita H."/>
            <person name="Murakawa K."/>
            <person name="Fujimori K."/>
            <person name="Tanai H."/>
            <person name="Kimata M."/>
            <person name="Watanabe M."/>
            <person name="Hiraoka S."/>
            <person name="Chiba Y."/>
            <person name="Ishida S."/>
            <person name="Ono Y."/>
            <person name="Takiguchi S."/>
            <person name="Watanabe S."/>
            <person name="Yosida M."/>
            <person name="Hotuta T."/>
            <person name="Kusano J."/>
            <person name="Kanehori K."/>
            <person name="Takahashi-Fujii A."/>
            <person name="Hara H."/>
            <person name="Tanase T.-O."/>
            <person name="Nomura Y."/>
            <person name="Togiya S."/>
            <person name="Komai F."/>
            <person name="Hara R."/>
            <person name="Takeuchi K."/>
            <person name="Arita M."/>
            <person name="Imose N."/>
            <person name="Musashino K."/>
            <person name="Yuuki H."/>
            <person name="Oshima A."/>
            <person name="Sasaki N."/>
            <person name="Aotsuka S."/>
            <person name="Yoshikawa Y."/>
            <person name="Matsunawa H."/>
            <person name="Ichihara T."/>
            <person name="Shiohata N."/>
            <person name="Sano S."/>
            <person name="Moriya S."/>
            <person name="Momiyama H."/>
            <person name="Satoh N."/>
            <person name="Takami S."/>
            <person name="Terashima Y."/>
            <person name="Suzuki O."/>
            <person name="Nakagawa S."/>
            <person name="Senoh A."/>
            <person name="Mizoguchi H."/>
            <person name="Goto Y."/>
            <person name="Shimizu F."/>
            <person name="Wakebe H."/>
            <person name="Hishigaki H."/>
            <person name="Watanabe T."/>
            <person name="Sugiyama A."/>
            <person name="Takemoto M."/>
            <person name="Kawakami B."/>
            <person name="Yamazaki M."/>
            <person name="Watanabe K."/>
            <person name="Kumagai A."/>
            <person name="Itakura S."/>
            <person name="Fukuzumi Y."/>
            <person name="Fujimori Y."/>
            <person name="Komiyama M."/>
            <person name="Tashiro H."/>
            <person name="Tanigami A."/>
            <person name="Fujiwara T."/>
            <person name="Ono T."/>
            <person name="Yamada K."/>
            <person name="Fujii Y."/>
            <person name="Ozaki K."/>
            <person name="Hirao M."/>
            <person name="Ohmori Y."/>
            <person name="Kawabata A."/>
            <person name="Hikiji T."/>
            <person name="Kobatake N."/>
            <person name="Inagaki H."/>
            <person name="Ikema Y."/>
            <person name="Okamoto S."/>
            <person name="Okitani R."/>
            <person name="Kawakami T."/>
            <person name="Noguchi S."/>
            <person name="Itoh T."/>
            <person name="Shigeta K."/>
            <person name="Senba T."/>
            <person name="Matsumura K."/>
            <person name="Nakajima Y."/>
            <person name="Mizuno T."/>
            <person name="Morinaga M."/>
            <person name="Sasaki M."/>
            <person name="Togashi T."/>
            <person name="Oyama M."/>
            <person name="Hata H."/>
            <person name="Watanabe M."/>
            <person name="Komatsu T."/>
            <person name="Mizushima-Sugano J."/>
            <person name="Satoh T."/>
            <person name="Shirai Y."/>
            <person name="Takahashi Y."/>
            <person name="Nakagawa K."/>
            <person name="Okumura K."/>
            <person name="Nagase T."/>
            <person name="Nomura N."/>
            <person name="Kikuchi H."/>
            <person name="Masuho Y."/>
            <person name="Yamashita R."/>
            <person name="Nakai K."/>
            <person name="Yada T."/>
            <person name="Nakamura Y."/>
            <person name="Ohara O."/>
            <person name="Isogai T."/>
            <person name="Sugano S."/>
        </authorList>
    </citation>
    <scope>NUCLEOTIDE SEQUENCE [LARGE SCALE MRNA] (ISOFORM 2)</scope>
    <source>
        <tissue>Ovarian carcinoma</tissue>
    </source>
</reference>
<reference key="7">
    <citation type="journal article" date="2005" name="Nature">
        <title>Generation and annotation of the DNA sequences of human chromosomes 2 and 4.</title>
        <authorList>
            <person name="Hillier L.W."/>
            <person name="Graves T.A."/>
            <person name="Fulton R.S."/>
            <person name="Fulton L.A."/>
            <person name="Pepin K.H."/>
            <person name="Minx P."/>
            <person name="Wagner-McPherson C."/>
            <person name="Layman D."/>
            <person name="Wylie K."/>
            <person name="Sekhon M."/>
            <person name="Becker M.C."/>
            <person name="Fewell G.A."/>
            <person name="Delehaunty K.D."/>
            <person name="Miner T.L."/>
            <person name="Nash W.E."/>
            <person name="Kremitzki C."/>
            <person name="Oddy L."/>
            <person name="Du H."/>
            <person name="Sun H."/>
            <person name="Bradshaw-Cordum H."/>
            <person name="Ali J."/>
            <person name="Carter J."/>
            <person name="Cordes M."/>
            <person name="Harris A."/>
            <person name="Isak A."/>
            <person name="van Brunt A."/>
            <person name="Nguyen C."/>
            <person name="Du F."/>
            <person name="Courtney L."/>
            <person name="Kalicki J."/>
            <person name="Ozersky P."/>
            <person name="Abbott S."/>
            <person name="Armstrong J."/>
            <person name="Belter E.A."/>
            <person name="Caruso L."/>
            <person name="Cedroni M."/>
            <person name="Cotton M."/>
            <person name="Davidson T."/>
            <person name="Desai A."/>
            <person name="Elliott G."/>
            <person name="Erb T."/>
            <person name="Fronick C."/>
            <person name="Gaige T."/>
            <person name="Haakenson W."/>
            <person name="Haglund K."/>
            <person name="Holmes A."/>
            <person name="Harkins R."/>
            <person name="Kim K."/>
            <person name="Kruchowski S.S."/>
            <person name="Strong C.M."/>
            <person name="Grewal N."/>
            <person name="Goyea E."/>
            <person name="Hou S."/>
            <person name="Levy A."/>
            <person name="Martinka S."/>
            <person name="Mead K."/>
            <person name="McLellan M.D."/>
            <person name="Meyer R."/>
            <person name="Randall-Maher J."/>
            <person name="Tomlinson C."/>
            <person name="Dauphin-Kohlberg S."/>
            <person name="Kozlowicz-Reilly A."/>
            <person name="Shah N."/>
            <person name="Swearengen-Shahid S."/>
            <person name="Snider J."/>
            <person name="Strong J.T."/>
            <person name="Thompson J."/>
            <person name="Yoakum M."/>
            <person name="Leonard S."/>
            <person name="Pearman C."/>
            <person name="Trani L."/>
            <person name="Radionenko M."/>
            <person name="Waligorski J.E."/>
            <person name="Wang C."/>
            <person name="Rock S.M."/>
            <person name="Tin-Wollam A.-M."/>
            <person name="Maupin R."/>
            <person name="Latreille P."/>
            <person name="Wendl M.C."/>
            <person name="Yang S.-P."/>
            <person name="Pohl C."/>
            <person name="Wallis J.W."/>
            <person name="Spieth J."/>
            <person name="Bieri T.A."/>
            <person name="Berkowicz N."/>
            <person name="Nelson J.O."/>
            <person name="Osborne J."/>
            <person name="Ding L."/>
            <person name="Meyer R."/>
            <person name="Sabo A."/>
            <person name="Shotland Y."/>
            <person name="Sinha P."/>
            <person name="Wohldmann P.E."/>
            <person name="Cook L.L."/>
            <person name="Hickenbotham M.T."/>
            <person name="Eldred J."/>
            <person name="Williams D."/>
            <person name="Jones T.A."/>
            <person name="She X."/>
            <person name="Ciccarelli F.D."/>
            <person name="Izaurralde E."/>
            <person name="Taylor J."/>
            <person name="Schmutz J."/>
            <person name="Myers R.M."/>
            <person name="Cox D.R."/>
            <person name="Huang X."/>
            <person name="McPherson J.D."/>
            <person name="Mardis E.R."/>
            <person name="Clifton S.W."/>
            <person name="Warren W.C."/>
            <person name="Chinwalla A.T."/>
            <person name="Eddy S.R."/>
            <person name="Marra M.A."/>
            <person name="Ovcharenko I."/>
            <person name="Furey T.S."/>
            <person name="Miller W."/>
            <person name="Eichler E.E."/>
            <person name="Bork P."/>
            <person name="Suyama M."/>
            <person name="Torrents D."/>
            <person name="Waterston R.H."/>
            <person name="Wilson R.K."/>
        </authorList>
    </citation>
    <scope>NUCLEOTIDE SEQUENCE [LARGE SCALE GENOMIC DNA]</scope>
</reference>
<reference key="8">
    <citation type="submission" date="2005-07" db="EMBL/GenBank/DDBJ databases">
        <authorList>
            <person name="Mural R.J."/>
            <person name="Istrail S."/>
            <person name="Sutton G.G."/>
            <person name="Florea L."/>
            <person name="Halpern A.L."/>
            <person name="Mobarry C.M."/>
            <person name="Lippert R."/>
            <person name="Walenz B."/>
            <person name="Shatkay H."/>
            <person name="Dew I."/>
            <person name="Miller J.R."/>
            <person name="Flanigan M.J."/>
            <person name="Edwards N.J."/>
            <person name="Bolanos R."/>
            <person name="Fasulo D."/>
            <person name="Halldorsson B.V."/>
            <person name="Hannenhalli S."/>
            <person name="Turner R."/>
            <person name="Yooseph S."/>
            <person name="Lu F."/>
            <person name="Nusskern D.R."/>
            <person name="Shue B.C."/>
            <person name="Zheng X.H."/>
            <person name="Zhong F."/>
            <person name="Delcher A.L."/>
            <person name="Huson D.H."/>
            <person name="Kravitz S.A."/>
            <person name="Mouchard L."/>
            <person name="Reinert K."/>
            <person name="Remington K.A."/>
            <person name="Clark A.G."/>
            <person name="Waterman M.S."/>
            <person name="Eichler E.E."/>
            <person name="Adams M.D."/>
            <person name="Hunkapiller M.W."/>
            <person name="Myers E.W."/>
            <person name="Venter J.C."/>
        </authorList>
    </citation>
    <scope>NUCLEOTIDE SEQUENCE [LARGE SCALE GENOMIC DNA]</scope>
</reference>
<reference key="9">
    <citation type="journal article" date="2004" name="Genome Res.">
        <title>The status, quality, and expansion of the NIH full-length cDNA project: the Mammalian Gene Collection (MGC).</title>
        <authorList>
            <consortium name="The MGC Project Team"/>
        </authorList>
    </citation>
    <scope>NUCLEOTIDE SEQUENCE [LARGE SCALE MRNA] (ISOFORM 1)</scope>
    <source>
        <tissue>Skin</tissue>
    </source>
</reference>
<reference key="10">
    <citation type="journal article" date="2003" name="Biochem. Biophys. Res. Commun.">
        <title>Identification and characterization of NIF3L1 BP1, a novel cytoplasmic interaction partner of the NIF3L1 protein.</title>
        <authorList>
            <person name="Tascou S."/>
            <person name="Kang T.W."/>
            <person name="Trappe R."/>
            <person name="Engel W."/>
            <person name="Burfeind P."/>
        </authorList>
    </citation>
    <scope>ALTERNATIVE SPLICING (ISOFORMS 1 AND 2)</scope>
    <scope>HOMODIMERIZATION</scope>
    <scope>INTERACTION WITH THOC7</scope>
    <scope>SUBCELLULAR LOCATION</scope>
</reference>
<reference key="11">
    <citation type="journal article" date="2009" name="Science">
        <title>Lysine acetylation targets protein complexes and co-regulates major cellular functions.</title>
        <authorList>
            <person name="Choudhary C."/>
            <person name="Kumar C."/>
            <person name="Gnad F."/>
            <person name="Nielsen M.L."/>
            <person name="Rehman M."/>
            <person name="Walther T.C."/>
            <person name="Olsen J.V."/>
            <person name="Mann M."/>
        </authorList>
    </citation>
    <scope>ACETYLATION [LARGE SCALE ANALYSIS] AT LYS-109</scope>
    <scope>IDENTIFICATION BY MASS SPECTROMETRY [LARGE SCALE ANALYSIS]</scope>
</reference>
<reference key="12">
    <citation type="journal article" date="2011" name="BMC Syst. Biol.">
        <title>Initial characterization of the human central proteome.</title>
        <authorList>
            <person name="Burkard T.R."/>
            <person name="Planyavsky M."/>
            <person name="Kaupe I."/>
            <person name="Breitwieser F.P."/>
            <person name="Buerckstuemmer T."/>
            <person name="Bennett K.L."/>
            <person name="Superti-Furga G."/>
            <person name="Colinge J."/>
        </authorList>
    </citation>
    <scope>IDENTIFICATION BY MASS SPECTROMETRY [LARGE SCALE ANALYSIS]</scope>
</reference>
<reference key="13">
    <citation type="journal article" date="2014" name="J. Proteomics">
        <title>An enzyme assisted RP-RPLC approach for in-depth analysis of human liver phosphoproteome.</title>
        <authorList>
            <person name="Bian Y."/>
            <person name="Song C."/>
            <person name="Cheng K."/>
            <person name="Dong M."/>
            <person name="Wang F."/>
            <person name="Huang J."/>
            <person name="Sun D."/>
            <person name="Wang L."/>
            <person name="Ye M."/>
            <person name="Zou H."/>
        </authorList>
    </citation>
    <scope>IDENTIFICATION BY MASS SPECTROMETRY [LARGE SCALE ANALYSIS]</scope>
    <source>
        <tissue>Liver</tissue>
    </source>
</reference>
<name>NIF3L_HUMAN</name>
<accession>Q9GZT8</accession>
<accession>Q53TX4</accession>
<accession>Q6X735</accession>
<accession>Q9H2D2</accession>
<accession>Q9HC18</accession>
<gene>
    <name evidence="11" type="primary">NIF3L1</name>
    <name evidence="4" type="synonym">ALS2CR1</name>
    <name type="ORF">MDS015</name>
    <name type="ORF">My018</name>
</gene>
<protein>
    <recommendedName>
        <fullName evidence="10">NIF3-like protein 1</fullName>
    </recommendedName>
    <alternativeName>
        <fullName evidence="4">Amyotrophic lateral sclerosis 2 chromosomal region candidate gene 1 protein</fullName>
    </alternativeName>
</protein>
<keyword id="KW-0007">Acetylation</keyword>
<keyword id="KW-0025">Alternative splicing</keyword>
<keyword id="KW-0963">Cytoplasm</keyword>
<keyword id="KW-0539">Nucleus</keyword>
<keyword id="KW-0597">Phosphoprotein</keyword>
<keyword id="KW-1267">Proteomics identification</keyword>
<keyword id="KW-1185">Reference proteome</keyword>
<organism>
    <name type="scientific">Homo sapiens</name>
    <name type="common">Human</name>
    <dbReference type="NCBI Taxonomy" id="9606"/>
    <lineage>
        <taxon>Eukaryota</taxon>
        <taxon>Metazoa</taxon>
        <taxon>Chordata</taxon>
        <taxon>Craniata</taxon>
        <taxon>Vertebrata</taxon>
        <taxon>Euteleostomi</taxon>
        <taxon>Mammalia</taxon>
        <taxon>Eutheria</taxon>
        <taxon>Euarchontoglires</taxon>
        <taxon>Primates</taxon>
        <taxon>Haplorrhini</taxon>
        <taxon>Catarrhini</taxon>
        <taxon>Hominidae</taxon>
        <taxon>Homo</taxon>
    </lineage>
</organism>
<proteinExistence type="evidence at protein level"/>
<feature type="chain" id="PRO_0000147353" description="NIF3-like protein 1">
    <location>
        <begin position="1"/>
        <end position="377"/>
    </location>
</feature>
<feature type="region of interest" description="Mediates interaction with COPS2" evidence="1">
    <location>
        <begin position="244"/>
        <end position="377"/>
    </location>
</feature>
<feature type="modified residue" description="N6-acetyllysine" evidence="12">
    <location>
        <position position="109"/>
    </location>
</feature>
<feature type="modified residue" description="Phosphothreonine" evidence="1">
    <location>
        <position position="255"/>
    </location>
</feature>
<feature type="modified residue" description="Phosphoserine" evidence="1">
    <location>
        <position position="259"/>
    </location>
</feature>
<feature type="splice variant" id="VSP_029328" description="In isoform 2." evidence="4 5 7 8">
    <location>
        <begin position="1"/>
        <end position="27"/>
    </location>
</feature>
<feature type="splice variant" id="VSP_043248" description="In isoform 3." evidence="6">
    <original>PLLLHTGMGRLCTLDESVSLATMIDRIKRHLKLSHIRLALGVGRTLESQVKVVALCAGSGSSVLQGVEADLYLTGEMSHHDTLDAASQGINVILCEHSNTERGFLSDLRDMLDSHLENKINIILSETDRDPLQVV</original>
    <variation>SLKSKSWPCVLVLGAAFCRVLRLTFTSQVRCPIMILWMLLPKE</variation>
    <location>
        <begin position="243"/>
        <end position="377"/>
    </location>
</feature>
<feature type="sequence variant" id="VAR_037084" description="In dbSNP:rs7917.">
    <original>T</original>
    <variation>I</variation>
    <location>
        <position position="324"/>
    </location>
</feature>
<feature type="sequence conflict" description="In Ref. 5; AAG14952." evidence="9" ref="5">
    <original>K</original>
    <variation>E</variation>
    <location>
        <position position="109"/>
    </location>
</feature>
<evidence type="ECO:0000250" key="1">
    <source>
        <dbReference type="UniProtKB" id="Q9EQ80"/>
    </source>
</evidence>
<evidence type="ECO:0000269" key="2">
    <source>
    </source>
</evidence>
<evidence type="ECO:0000269" key="3">
    <source>
    </source>
</evidence>
<evidence type="ECO:0000303" key="4">
    <source>
    </source>
</evidence>
<evidence type="ECO:0000303" key="5">
    <source>
    </source>
</evidence>
<evidence type="ECO:0000303" key="6">
    <source ref="3"/>
</evidence>
<evidence type="ECO:0000303" key="7">
    <source ref="4"/>
</evidence>
<evidence type="ECO:0000303" key="8">
    <source ref="5"/>
</evidence>
<evidence type="ECO:0000305" key="9"/>
<evidence type="ECO:0000305" key="10">
    <source>
    </source>
</evidence>
<evidence type="ECO:0000312" key="11">
    <source>
        <dbReference type="HGNC" id="HGNC:13390"/>
    </source>
</evidence>
<evidence type="ECO:0007744" key="12">
    <source>
    </source>
</evidence>
<sequence length="377" mass="41968">MLSSCVRPVPTTVRFVDSLICNSSRSFMDLKALLSSLNDFASLSFAESWDNVGLLVEPSPPHTVNTLFLTNDLTEEVMEEVLQKKADLILSYHPPIFRPMKRITWNTWKERLVIRALENRVGIYSPHTAYDAAPQGVNNWLAKGLGACTSRPIHPSKAPNYPTEGNHRVEFNVNYTQDLDKVMSAVKGIDGVSVTSFSARTGNEEQTRINLNCTQKALMQVVDFLSRNKQLYQKTEILSLEKPLLLHTGMGRLCTLDESVSLATMIDRIKRHLKLSHIRLALGVGRTLESQVKVVALCAGSGSSVLQGVEADLYLTGEMSHHDTLDAASQGINVILCEHSNTERGFLSDLRDMLDSHLENKINIILSETDRDPLQVV</sequence>
<comment type="function">
    <text evidence="1">May function as a transcriptional corepressor through its interaction with COPS2, negatively regulating the expression of genes involved in neuronal differentiation.</text>
</comment>
<comment type="subunit">
    <text evidence="1 3">Homodimer (PubMed:12951069). Interacts with COPS2 (By similarity). Interacts with THOC7 (PubMed:12951069).</text>
</comment>
<comment type="interaction">
    <interactant intactId="EBI-740897">
        <id>Q9GZT8</id>
    </interactant>
    <interactant intactId="EBI-8637516">
        <id>Q9NXW9</id>
        <label>ALKBH4</label>
    </interactant>
    <organismsDiffer>false</organismsDiffer>
    <experiments>5</experiments>
</comment>
<comment type="interaction">
    <interactant intactId="EBI-740897">
        <id>Q9GZT8</id>
    </interactant>
    <interactant intactId="EBI-5917279">
        <id>Q2VPB7</id>
        <label>AP5B1</label>
    </interactant>
    <organismsDiffer>false</organismsDiffer>
    <experiments>3</experiments>
</comment>
<comment type="interaction">
    <interactant intactId="EBI-740897">
        <id>Q9GZT8</id>
    </interactant>
    <interactant intactId="EBI-10258086">
        <id>Q7Z6K5</id>
        <label>ARPIN</label>
    </interactant>
    <organismsDiffer>false</organismsDiffer>
    <experiments>3</experiments>
</comment>
<comment type="interaction">
    <interactant intactId="EBI-740897">
        <id>Q9GZT8</id>
    </interactant>
    <interactant intactId="EBI-743382">
        <id>Q8N7W2</id>
        <label>BEND7</label>
    </interactant>
    <organismsDiffer>false</organismsDiffer>
    <experiments>3</experiments>
</comment>
<comment type="interaction">
    <interactant intactId="EBI-740897">
        <id>Q9GZT8</id>
    </interactant>
    <interactant intactId="EBI-725606">
        <id>Q9NWQ9</id>
        <label>C14orf119</label>
    </interactant>
    <organismsDiffer>false</organismsDiffer>
    <experiments>3</experiments>
</comment>
<comment type="interaction">
    <interactant intactId="EBI-740897">
        <id>Q9GZT8</id>
    </interactant>
    <interactant intactId="EBI-523958">
        <id>P55210</id>
        <label>CASP7</label>
    </interactant>
    <organismsDiffer>false</organismsDiffer>
    <experiments>3</experiments>
</comment>
<comment type="interaction">
    <interactant intactId="EBI-740897">
        <id>Q9GZT8</id>
    </interactant>
    <interactant intactId="EBI-10171570">
        <id>Q68D86</id>
        <label>CCDC102B</label>
    </interactant>
    <organismsDiffer>false</organismsDiffer>
    <experiments>6</experiments>
</comment>
<comment type="interaction">
    <interactant intactId="EBI-740897">
        <id>Q9GZT8</id>
    </interactant>
    <interactant intactId="EBI-711280">
        <id>P42772</id>
        <label>CDKN2B</label>
    </interactant>
    <organismsDiffer>false</organismsDiffer>
    <experiments>3</experiments>
</comment>
<comment type="interaction">
    <interactant intactId="EBI-740897">
        <id>Q9GZT8</id>
    </interactant>
    <interactant intactId="EBI-711290">
        <id>P42773</id>
        <label>CDKN2C</label>
    </interactant>
    <organismsDiffer>false</organismsDiffer>
    <experiments>6</experiments>
</comment>
<comment type="interaction">
    <interactant intactId="EBI-740897">
        <id>Q9GZT8</id>
    </interactant>
    <interactant intactId="EBI-745859">
        <id>P55273</id>
        <label>CDKN2D</label>
    </interactant>
    <organismsDiffer>false</organismsDiffer>
    <experiments>3</experiments>
</comment>
<comment type="interaction">
    <interactant intactId="EBI-740897">
        <id>Q9GZT8</id>
    </interactant>
    <interactant intactId="EBI-1055930">
        <id>Q9NUQ9</id>
        <label>CYRIB</label>
    </interactant>
    <organismsDiffer>false</organismsDiffer>
    <experiments>3</experiments>
</comment>
<comment type="interaction">
    <interactant intactId="EBI-740897">
        <id>Q9GZT8</id>
    </interactant>
    <interactant intactId="EBI-10303987">
        <id>Q9UHG0</id>
        <label>DCDC2</label>
    </interactant>
    <organismsDiffer>false</organismsDiffer>
    <experiments>3</experiments>
</comment>
<comment type="interaction">
    <interactant intactId="EBI-740897">
        <id>Q9GZT8</id>
    </interactant>
    <interactant intactId="EBI-741925">
        <id>P49366</id>
        <label>DHPS</label>
    </interactant>
    <organismsDiffer>false</organismsDiffer>
    <experiments>3</experiments>
</comment>
<comment type="interaction">
    <interactant intactId="EBI-740897">
        <id>Q9GZT8</id>
    </interactant>
    <interactant intactId="EBI-930865">
        <id>Q14565</id>
        <label>DMC1</label>
    </interactant>
    <organismsDiffer>false</organismsDiffer>
    <experiments>9</experiments>
</comment>
<comment type="interaction">
    <interactant intactId="EBI-740897">
        <id>Q9GZT8</id>
    </interactant>
    <interactant intactId="EBI-740376">
        <id>Q86UW9</id>
        <label>DTX2</label>
    </interactant>
    <organismsDiffer>false</organismsDiffer>
    <experiments>3</experiments>
</comment>
<comment type="interaction">
    <interactant intactId="EBI-740897">
        <id>Q9GZT8</id>
    </interactant>
    <interactant intactId="EBI-724940">
        <id>Q9BVJ7</id>
        <label>DUSP23</label>
    </interactant>
    <organismsDiffer>false</organismsDiffer>
    <experiments>3</experiments>
</comment>
<comment type="interaction">
    <interactant intactId="EBI-740897">
        <id>Q9GZT8</id>
    </interactant>
    <interactant intactId="EBI-1054321">
        <id>Q68J44</id>
        <label>DUSP29</label>
    </interactant>
    <organismsDiffer>false</organismsDiffer>
    <experiments>3</experiments>
</comment>
<comment type="interaction">
    <interactant intactId="EBI-740897">
        <id>Q9GZT8</id>
    </interactant>
    <interactant intactId="EBI-743027">
        <id>P51808</id>
        <label>DYNLT3</label>
    </interactant>
    <organismsDiffer>false</organismsDiffer>
    <experiments>3</experiments>
</comment>
<comment type="interaction">
    <interactant intactId="EBI-740897">
        <id>Q9GZT8</id>
    </interactant>
    <interactant intactId="EBI-299104">
        <id>P38919</id>
        <label>EIF4A3</label>
    </interactant>
    <organismsDiffer>false</organismsDiffer>
    <experiments>3</experiments>
</comment>
<comment type="interaction">
    <interactant intactId="EBI-740897">
        <id>Q9GZT8</id>
    </interactant>
    <interactant intactId="EBI-748028">
        <id>Q9GZV4</id>
        <label>EIF5A2</label>
    </interactant>
    <organismsDiffer>false</organismsDiffer>
    <experiments>3</experiments>
</comment>
<comment type="interaction">
    <interactant intactId="EBI-740897">
        <id>Q9GZT8</id>
    </interactant>
    <interactant intactId="EBI-10182490">
        <id>O15197-2</id>
        <label>EPHB6</label>
    </interactant>
    <organismsDiffer>false</organismsDiffer>
    <experiments>3</experiments>
</comment>
<comment type="interaction">
    <interactant intactId="EBI-740897">
        <id>Q9GZT8</id>
    </interactant>
    <interactant intactId="EBI-11526128">
        <id>Q8NFF5-2</id>
        <label>FLAD1</label>
    </interactant>
    <organismsDiffer>false</organismsDiffer>
    <experiments>3</experiments>
</comment>
<comment type="interaction">
    <interactant intactId="EBI-740897">
        <id>Q9GZT8</id>
    </interactant>
    <interactant intactId="EBI-740459">
        <id>P51116</id>
        <label>FXR2</label>
    </interactant>
    <organismsDiffer>false</organismsDiffer>
    <experiments>3</experiments>
</comment>
<comment type="interaction">
    <interactant intactId="EBI-740897">
        <id>Q9GZT8</id>
    </interactant>
    <interactant intactId="EBI-401755">
        <id>P62993</id>
        <label>GRB2</label>
    </interactant>
    <organismsDiffer>false</organismsDiffer>
    <experiments>3</experiments>
</comment>
<comment type="interaction">
    <interactant intactId="EBI-740897">
        <id>Q9GZT8</id>
    </interactant>
    <interactant intactId="EBI-10990676">
        <id>Q96PC2</id>
        <label>IP6K3</label>
    </interactant>
    <organismsDiffer>false</organismsDiffer>
    <experiments>3</experiments>
</comment>
<comment type="interaction">
    <interactant intactId="EBI-740897">
        <id>Q9GZT8</id>
    </interactant>
    <interactant intactId="EBI-22452746">
        <id>Q9NZI2-2</id>
        <label>KCNIP1</label>
    </interactant>
    <organismsDiffer>false</organismsDiffer>
    <experiments>6</experiments>
</comment>
<comment type="interaction">
    <interactant intactId="EBI-740897">
        <id>Q9GZT8</id>
    </interactant>
    <interactant intactId="EBI-11954971">
        <id>Q96MP8-2</id>
        <label>KCTD7</label>
    </interactant>
    <organismsDiffer>false</organismsDiffer>
    <experiments>3</experiments>
</comment>
<comment type="interaction">
    <interactant intactId="EBI-740897">
        <id>Q9GZT8</id>
    </interactant>
    <interactant intactId="EBI-4397613">
        <id>Q7L273</id>
        <label>KCTD9</label>
    </interactant>
    <organismsDiffer>false</organismsDiffer>
    <experiments>3</experiments>
</comment>
<comment type="interaction">
    <interactant intactId="EBI-740897">
        <id>Q9GZT8</id>
    </interactant>
    <interactant intactId="EBI-1038192">
        <id>Q9UHA4</id>
        <label>LAMTOR3</label>
    </interactant>
    <organismsDiffer>false</organismsDiffer>
    <experiments>3</experiments>
</comment>
<comment type="interaction">
    <interactant intactId="EBI-740897">
        <id>Q9GZT8</id>
    </interactant>
    <interactant intactId="EBI-739696">
        <id>P25791</id>
        <label>LMO2</label>
    </interactant>
    <organismsDiffer>false</organismsDiffer>
    <experiments>3</experiments>
</comment>
<comment type="interaction">
    <interactant intactId="EBI-740897">
        <id>Q9GZT8</id>
    </interactant>
    <interactant intactId="EBI-11742507">
        <id>Q8TAP4-4</id>
        <label>LMO3</label>
    </interactant>
    <organismsDiffer>false</organismsDiffer>
    <experiments>3</experiments>
</comment>
<comment type="interaction">
    <interactant intactId="EBI-740897">
        <id>Q9GZT8</id>
    </interactant>
    <interactant intactId="EBI-8656665">
        <id>Q8N6N6</id>
        <label>NATD1</label>
    </interactant>
    <organismsDiffer>false</organismsDiffer>
    <experiments>6</experiments>
</comment>
<comment type="interaction">
    <interactant intactId="EBI-740897">
        <id>Q9GZT8</id>
    </interactant>
    <interactant intactId="EBI-11750983">
        <id>Q9HC98-4</id>
        <label>NEK6</label>
    </interactant>
    <organismsDiffer>false</organismsDiffer>
    <experiments>5</experiments>
</comment>
<comment type="interaction">
    <interactant intactId="EBI-740897">
        <id>Q9GZT8</id>
    </interactant>
    <interactant intactId="EBI-10311409">
        <id>Q9NPG2</id>
        <label>NGB</label>
    </interactant>
    <organismsDiffer>false</organismsDiffer>
    <experiments>5</experiments>
</comment>
<comment type="interaction">
    <interactant intactId="EBI-740897">
        <id>Q9GZT8</id>
    </interactant>
    <interactant intactId="EBI-740897">
        <id>Q9GZT8</id>
        <label>NIF3L1</label>
    </interactant>
    <organismsDiffer>false</organismsDiffer>
    <experiments>3</experiments>
</comment>
<comment type="interaction">
    <interactant intactId="EBI-740897">
        <id>Q9GZT8</id>
    </interactant>
    <interactant intactId="EBI-744782">
        <id>Q9Y5B8</id>
        <label>NME7</label>
    </interactant>
    <organismsDiffer>false</organismsDiffer>
    <experiments>3</experiments>
</comment>
<comment type="interaction">
    <interactant intactId="EBI-740897">
        <id>Q9GZT8</id>
    </interactant>
    <interactant intactId="EBI-536866">
        <id>O95848</id>
        <label>NUDT14</label>
    </interactant>
    <organismsDiffer>false</organismsDiffer>
    <experiments>6</experiments>
</comment>
<comment type="interaction">
    <interactant intactId="EBI-740897">
        <id>Q9GZT8</id>
    </interactant>
    <interactant intactId="EBI-10173275">
        <id>A4D0P7</id>
        <label>ORC5L</label>
    </interactant>
    <organismsDiffer>false</organismsDiffer>
    <experiments>3</experiments>
</comment>
<comment type="interaction">
    <interactant intactId="EBI-740897">
        <id>Q9GZT8</id>
    </interactant>
    <interactant intactId="EBI-711522">
        <id>Q15102</id>
        <label>PAFAH1B3</label>
    </interactant>
    <organismsDiffer>false</organismsDiffer>
    <experiments>3</experiments>
</comment>
<comment type="interaction">
    <interactant intactId="EBI-740897">
        <id>Q9GZT8</id>
    </interactant>
    <interactant intactId="EBI-1055079">
        <id>O15160</id>
        <label>POLR1C</label>
    </interactant>
    <organismsDiffer>false</organismsDiffer>
    <experiments>3</experiments>
</comment>
<comment type="interaction">
    <interactant intactId="EBI-740897">
        <id>Q9GZT8</id>
    </interactant>
    <interactant intactId="EBI-1055615">
        <id>O43447</id>
        <label>PPIH</label>
    </interactant>
    <organismsDiffer>false</organismsDiffer>
    <experiments>3</experiments>
</comment>
<comment type="interaction">
    <interactant intactId="EBI-740897">
        <id>Q9GZT8</id>
    </interactant>
    <interactant intactId="EBI-12164121">
        <id>Q15257-2</id>
        <label>PTPA</label>
    </interactant>
    <organismsDiffer>false</organismsDiffer>
    <experiments>3</experiments>
</comment>
<comment type="interaction">
    <interactant intactId="EBI-740897">
        <id>Q9GZT8</id>
    </interactant>
    <interactant intactId="EBI-712367">
        <id>Q9UI14</id>
        <label>RABAC1</label>
    </interactant>
    <organismsDiffer>false</organismsDiffer>
    <experiments>3</experiments>
</comment>
<comment type="interaction">
    <interactant intactId="EBI-740897">
        <id>Q9GZT8</id>
    </interactant>
    <interactant intactId="EBI-711613">
        <id>P21673</id>
        <label>SAT1</label>
    </interactant>
    <organismsDiffer>false</organismsDiffer>
    <experiments>5</experiments>
</comment>
<comment type="interaction">
    <interactant intactId="EBI-740897">
        <id>Q9GZT8</id>
    </interactant>
    <interactant intactId="EBI-693002">
        <id>Q8WYJ6</id>
        <label>SEPTIN1</label>
    </interactant>
    <organismsDiffer>false</organismsDiffer>
    <experiments>3</experiments>
</comment>
<comment type="interaction">
    <interactant intactId="EBI-740897">
        <id>Q9GZT8</id>
    </interactant>
    <interactant intactId="EBI-742688">
        <id>Q9NZD8</id>
        <label>SPG21</label>
    </interactant>
    <organismsDiffer>false</organismsDiffer>
    <experiments>3</experiments>
</comment>
<comment type="interaction">
    <interactant intactId="EBI-740897">
        <id>Q9GZT8</id>
    </interactant>
    <interactant intactId="EBI-749295">
        <id>O75716</id>
        <label>STK16</label>
    </interactant>
    <organismsDiffer>false</organismsDiffer>
    <experiments>3</experiments>
</comment>
<comment type="interaction">
    <interactant intactId="EBI-740897">
        <id>Q9GZT8</id>
    </interactant>
    <interactant intactId="EBI-6137631">
        <id>P50226</id>
        <label>SULT1A2</label>
    </interactant>
    <organismsDiffer>false</organismsDiffer>
    <experiments>3</experiments>
</comment>
<comment type="interaction">
    <interactant intactId="EBI-740897">
        <id>Q9GZT8</id>
    </interactant>
    <interactant intactId="EBI-10196922">
        <id>P0DMN0</id>
        <label>SULT1A4</label>
    </interactant>
    <organismsDiffer>false</organismsDiffer>
    <experiments>3</experiments>
</comment>
<comment type="interaction">
    <interactant intactId="EBI-740897">
        <id>Q9GZT8</id>
    </interactant>
    <interactant intactId="EBI-3921363">
        <id>Q06520</id>
        <label>SULT2A1</label>
    </interactant>
    <organismsDiffer>false</organismsDiffer>
    <experiments>3</experiments>
</comment>
<comment type="interaction">
    <interactant intactId="EBI-740897">
        <id>Q9GZT8</id>
    </interactant>
    <interactant intactId="EBI-745392">
        <id>Q9BSW7</id>
        <label>SYT17</label>
    </interactant>
    <organismsDiffer>false</organismsDiffer>
    <experiments>3</experiments>
</comment>
<comment type="interaction">
    <interactant intactId="EBI-740897">
        <id>Q9GZT8</id>
    </interactant>
    <interactant intactId="EBI-749995">
        <id>P56279</id>
        <label>TCL1A</label>
    </interactant>
    <organismsDiffer>false</organismsDiffer>
    <experiments>5</experiments>
</comment>
<comment type="interaction">
    <interactant intactId="EBI-740897">
        <id>Q9GZT8</id>
    </interactant>
    <interactant intactId="EBI-719493">
        <id>P14373</id>
        <label>TRIM27</label>
    </interactant>
    <organismsDiffer>false</organismsDiffer>
    <experiments>5</experiments>
</comment>
<comment type="interaction">
    <interactant intactId="EBI-740897">
        <id>Q9GZT8</id>
    </interactant>
    <interactant intactId="EBI-358993">
        <id>Q15645</id>
        <label>TRIP13</label>
    </interactant>
    <organismsDiffer>false</organismsDiffer>
    <experiments>3</experiments>
</comment>
<comment type="interaction">
    <interactant intactId="EBI-740897">
        <id>Q9GZT8</id>
    </interactant>
    <interactant intactId="EBI-594644">
        <id>P10599</id>
        <label>TXN</label>
    </interactant>
    <organismsDiffer>false</organismsDiffer>
    <experiments>3</experiments>
</comment>
<comment type="interaction">
    <interactant intactId="EBI-740897">
        <id>Q9GZT8</id>
    </interactant>
    <interactant intactId="EBI-515331">
        <id>P07947</id>
        <label>YES1</label>
    </interactant>
    <organismsDiffer>false</organismsDiffer>
    <experiments>3</experiments>
</comment>
<comment type="interaction">
    <interactant intactId="EBI-740897">
        <id>Q9GZT8</id>
    </interactant>
    <interactant intactId="EBI-9675698">
        <id>P14079</id>
        <label>tax</label>
    </interactant>
    <organismsDiffer>true</organismsDiffer>
    <experiments>3</experiments>
</comment>
<comment type="interaction">
    <interactant intactId="EBI-740897">
        <id>Q9GZT8</id>
    </interactant>
    <interactant intactId="EBI-9676175">
        <id>Q85601</id>
    </interactant>
    <organismsDiffer>true</organismsDiffer>
    <experiments>3</experiments>
</comment>
<comment type="subcellular location">
    <subcellularLocation>
        <location evidence="2 3">Cytoplasm</location>
    </subcellularLocation>
    <subcellularLocation>
        <location evidence="1">Nucleus</location>
    </subcellularLocation>
    <text evidence="1">Interaction with COPS2 may regulate localization to the nucleus.</text>
</comment>
<comment type="alternative products">
    <event type="alternative splicing"/>
    <isoform>
        <id>Q9GZT8-1</id>
        <name>1</name>
        <sequence type="displayed"/>
    </isoform>
    <isoform>
        <id>Q9GZT8-2</id>
        <name>2</name>
        <sequence type="described" ref="VSP_029328"/>
    </isoform>
    <isoform>
        <id>Q9GZT8-3</id>
        <name>3</name>
        <name>beta</name>
        <sequence type="described" ref="VSP_043248"/>
    </isoform>
</comment>
<comment type="similarity">
    <text evidence="9">Belongs to the GTP cyclohydrolase I type 2/NIF3 family.</text>
</comment>
<comment type="sequence caution" evidence="9">
    <conflict type="frameshift">
        <sequence resource="EMBL-CDS" id="AAG14952"/>
    </conflict>
</comment>
<dbReference type="EMBL" id="AF283538">
    <property type="protein sequence ID" value="AAG44846.1"/>
    <property type="molecule type" value="mRNA"/>
</dbReference>
<dbReference type="EMBL" id="AB038949">
    <property type="protein sequence ID" value="BAB32499.1"/>
    <property type="molecule type" value="mRNA"/>
</dbReference>
<dbReference type="EMBL" id="AY251943">
    <property type="protein sequence ID" value="AAP84063.1"/>
    <property type="molecule type" value="mRNA"/>
</dbReference>
<dbReference type="EMBL" id="AF060513">
    <property type="protein sequence ID" value="AAG43131.1"/>
    <property type="molecule type" value="mRNA"/>
</dbReference>
<dbReference type="EMBL" id="AF182416">
    <property type="protein sequence ID" value="AAG14952.1"/>
    <property type="status" value="ALT_FRAME"/>
    <property type="molecule type" value="mRNA"/>
</dbReference>
<dbReference type="EMBL" id="AK023378">
    <property type="protein sequence ID" value="BAB14551.1"/>
    <property type="molecule type" value="mRNA"/>
</dbReference>
<dbReference type="EMBL" id="AC005037">
    <property type="protein sequence ID" value="AAY14724.1"/>
    <property type="molecule type" value="Genomic_DNA"/>
</dbReference>
<dbReference type="EMBL" id="CH471063">
    <property type="protein sequence ID" value="EAW70224.1"/>
    <property type="molecule type" value="Genomic_DNA"/>
</dbReference>
<dbReference type="EMBL" id="BC007654">
    <property type="protein sequence ID" value="AAH07654.1"/>
    <property type="molecule type" value="mRNA"/>
</dbReference>
<dbReference type="CCDS" id="CCDS42797.1">
    <molecule id="Q9GZT8-2"/>
</dbReference>
<dbReference type="CCDS" id="CCDS46485.1">
    <molecule id="Q9GZT8-1"/>
</dbReference>
<dbReference type="CCDS" id="CCDS46486.1">
    <molecule id="Q9GZT8-3"/>
</dbReference>
<dbReference type="RefSeq" id="NP_001129511.1">
    <molecule id="Q9GZT8-1"/>
    <property type="nucleotide sequence ID" value="NM_001136039.2"/>
</dbReference>
<dbReference type="RefSeq" id="NP_001135827.1">
    <molecule id="Q9GZT8-2"/>
    <property type="nucleotide sequence ID" value="NM_001142355.1"/>
</dbReference>
<dbReference type="RefSeq" id="NP_001135828.1">
    <molecule id="Q9GZT8-3"/>
    <property type="nucleotide sequence ID" value="NM_001142356.1"/>
</dbReference>
<dbReference type="RefSeq" id="NP_001356370.1">
    <molecule id="Q9GZT8-1"/>
    <property type="nucleotide sequence ID" value="NM_001369441.2"/>
</dbReference>
<dbReference type="RefSeq" id="NP_001356371.1">
    <molecule id="Q9GZT8-1"/>
    <property type="nucleotide sequence ID" value="NM_001369442.1"/>
</dbReference>
<dbReference type="RefSeq" id="NP_001356372.1">
    <molecule id="Q9GZT8-2"/>
    <property type="nucleotide sequence ID" value="NM_001369443.1"/>
</dbReference>
<dbReference type="RefSeq" id="NP_001356373.1">
    <molecule id="Q9GZT8-1"/>
    <property type="nucleotide sequence ID" value="NM_001369444.1"/>
</dbReference>
<dbReference type="RefSeq" id="NP_001356374.1">
    <molecule id="Q9GZT8-1"/>
    <property type="nucleotide sequence ID" value="NM_001369445.2"/>
</dbReference>
<dbReference type="RefSeq" id="NP_068596.2">
    <molecule id="Q9GZT8-2"/>
    <property type="nucleotide sequence ID" value="NM_021824.3"/>
</dbReference>
<dbReference type="RefSeq" id="XP_005246799.1">
    <property type="nucleotide sequence ID" value="XM_005246742.3"/>
</dbReference>
<dbReference type="RefSeq" id="XP_011509884.1">
    <property type="nucleotide sequence ID" value="XM_011511582.1"/>
</dbReference>
<dbReference type="RefSeq" id="XP_011509885.1">
    <property type="nucleotide sequence ID" value="XM_011511583.1"/>
</dbReference>
<dbReference type="RefSeq" id="XP_011509886.1">
    <property type="nucleotide sequence ID" value="XM_011511584.1"/>
</dbReference>
<dbReference type="RefSeq" id="XP_011509887.1">
    <property type="nucleotide sequence ID" value="XM_011511585.1"/>
</dbReference>
<dbReference type="RefSeq" id="XP_016860119.1">
    <property type="nucleotide sequence ID" value="XM_017004630.1"/>
</dbReference>
<dbReference type="RefSeq" id="XP_047301327.1">
    <molecule id="Q9GZT8-1"/>
    <property type="nucleotide sequence ID" value="XM_047445371.1"/>
</dbReference>
<dbReference type="RefSeq" id="XP_047301328.1">
    <molecule id="Q9GZT8-1"/>
    <property type="nucleotide sequence ID" value="XM_047445372.1"/>
</dbReference>
<dbReference type="RefSeq" id="XP_054199248.1">
    <molecule id="Q9GZT8-1"/>
    <property type="nucleotide sequence ID" value="XM_054343273.1"/>
</dbReference>
<dbReference type="RefSeq" id="XP_054199249.1">
    <molecule id="Q9GZT8-1"/>
    <property type="nucleotide sequence ID" value="XM_054343274.1"/>
</dbReference>
<dbReference type="SMR" id="Q9GZT8"/>
<dbReference type="BioGRID" id="121922">
    <property type="interactions" value="178"/>
</dbReference>
<dbReference type="FunCoup" id="Q9GZT8">
    <property type="interactions" value="3435"/>
</dbReference>
<dbReference type="IntAct" id="Q9GZT8">
    <property type="interactions" value="127"/>
</dbReference>
<dbReference type="MINT" id="Q9GZT8"/>
<dbReference type="STRING" id="9606.ENSP00000498853"/>
<dbReference type="iPTMnet" id="Q9GZT8"/>
<dbReference type="MetOSite" id="Q9GZT8"/>
<dbReference type="PhosphoSitePlus" id="Q9GZT8"/>
<dbReference type="BioMuta" id="NIF3L1"/>
<dbReference type="DMDM" id="160112850"/>
<dbReference type="jPOST" id="Q9GZT8"/>
<dbReference type="MassIVE" id="Q9GZT8"/>
<dbReference type="PaxDb" id="9606-ENSP00000386394"/>
<dbReference type="PeptideAtlas" id="Q9GZT8"/>
<dbReference type="ProteomicsDB" id="80135">
    <molecule id="Q9GZT8-1"/>
</dbReference>
<dbReference type="ProteomicsDB" id="80136">
    <molecule id="Q9GZT8-2"/>
</dbReference>
<dbReference type="ProteomicsDB" id="80137">
    <molecule id="Q9GZT8-3"/>
</dbReference>
<dbReference type="Pumba" id="Q9GZT8"/>
<dbReference type="Antibodypedia" id="34126">
    <property type="antibodies" value="317 antibodies from 30 providers"/>
</dbReference>
<dbReference type="DNASU" id="60491"/>
<dbReference type="Ensembl" id="ENST00000359683.8">
    <molecule id="Q9GZT8-2"/>
    <property type="protein sequence ID" value="ENSP00000352711.4"/>
    <property type="gene ID" value="ENSG00000196290.17"/>
</dbReference>
<dbReference type="Ensembl" id="ENST00000409020.6">
    <molecule id="Q9GZT8-1"/>
    <property type="protein sequence ID" value="ENSP00000386394.1"/>
    <property type="gene ID" value="ENSG00000196290.17"/>
</dbReference>
<dbReference type="Ensembl" id="ENST00000409357.5">
    <molecule id="Q9GZT8-1"/>
    <property type="protein sequence ID" value="ENSP00000387315.1"/>
    <property type="gene ID" value="ENSG00000196290.17"/>
</dbReference>
<dbReference type="Ensembl" id="ENST00000409588.1">
    <molecule id="Q9GZT8-3"/>
    <property type="protein sequence ID" value="ENSP00000387021.1"/>
    <property type="gene ID" value="ENSG00000196290.17"/>
</dbReference>
<dbReference type="Ensembl" id="ENST00000651500.1">
    <molecule id="Q9GZT8-1"/>
    <property type="protein sequence ID" value="ENSP00000498853.1"/>
    <property type="gene ID" value="ENSG00000196290.17"/>
</dbReference>
<dbReference type="GeneID" id="60491"/>
<dbReference type="KEGG" id="hsa:60491"/>
<dbReference type="MANE-Select" id="ENST00000409020.6">
    <property type="protein sequence ID" value="ENSP00000386394.1"/>
    <property type="RefSeq nucleotide sequence ID" value="NM_001369441.2"/>
    <property type="RefSeq protein sequence ID" value="NP_001356370.1"/>
</dbReference>
<dbReference type="UCSC" id="uc002uwn.3">
    <molecule id="Q9GZT8-1"/>
    <property type="organism name" value="human"/>
</dbReference>
<dbReference type="AGR" id="HGNC:13390"/>
<dbReference type="CTD" id="60491"/>
<dbReference type="GeneCards" id="NIF3L1"/>
<dbReference type="HGNC" id="HGNC:13390">
    <property type="gene designation" value="NIF3L1"/>
</dbReference>
<dbReference type="HPA" id="ENSG00000196290">
    <property type="expression patterns" value="Low tissue specificity"/>
</dbReference>
<dbReference type="MIM" id="605778">
    <property type="type" value="gene"/>
</dbReference>
<dbReference type="neXtProt" id="NX_Q9GZT8"/>
<dbReference type="OpenTargets" id="ENSG00000196290"/>
<dbReference type="PharmGKB" id="PA31629"/>
<dbReference type="VEuPathDB" id="HostDB:ENSG00000196290"/>
<dbReference type="eggNOG" id="KOG4131">
    <property type="taxonomic scope" value="Eukaryota"/>
</dbReference>
<dbReference type="GeneTree" id="ENSGT00390000003590"/>
<dbReference type="HOGENOM" id="CLU_037423_0_0_1"/>
<dbReference type="InParanoid" id="Q9GZT8"/>
<dbReference type="OMA" id="KYHEFFD"/>
<dbReference type="OrthoDB" id="3345469at2759"/>
<dbReference type="PAN-GO" id="Q9GZT8">
    <property type="GO annotations" value="2 GO annotations based on evolutionary models"/>
</dbReference>
<dbReference type="PhylomeDB" id="Q9GZT8"/>
<dbReference type="TreeFam" id="TF324125"/>
<dbReference type="PathwayCommons" id="Q9GZT8"/>
<dbReference type="SignaLink" id="Q9GZT8"/>
<dbReference type="BioGRID-ORCS" id="60491">
    <property type="hits" value="15 hits in 1161 CRISPR screens"/>
</dbReference>
<dbReference type="GeneWiki" id="NIF3L1"/>
<dbReference type="GenomeRNAi" id="60491"/>
<dbReference type="Pharos" id="Q9GZT8">
    <property type="development level" value="Tbio"/>
</dbReference>
<dbReference type="PRO" id="PR:Q9GZT8"/>
<dbReference type="Proteomes" id="UP000005640">
    <property type="component" value="Chromosome 2"/>
</dbReference>
<dbReference type="RNAct" id="Q9GZT8">
    <property type="molecule type" value="protein"/>
</dbReference>
<dbReference type="Bgee" id="ENSG00000196290">
    <property type="expression patterns" value="Expressed in secondary oocyte and 203 other cell types or tissues"/>
</dbReference>
<dbReference type="ExpressionAtlas" id="Q9GZT8">
    <property type="expression patterns" value="baseline and differential"/>
</dbReference>
<dbReference type="GO" id="GO:0005737">
    <property type="term" value="C:cytoplasm"/>
    <property type="evidence" value="ECO:0000314"/>
    <property type="project" value="UniProtKB"/>
</dbReference>
<dbReference type="GO" id="GO:0005739">
    <property type="term" value="C:mitochondrion"/>
    <property type="evidence" value="ECO:0000318"/>
    <property type="project" value="GO_Central"/>
</dbReference>
<dbReference type="GO" id="GO:0005634">
    <property type="term" value="C:nucleus"/>
    <property type="evidence" value="ECO:0000250"/>
    <property type="project" value="UniProtKB"/>
</dbReference>
<dbReference type="GO" id="GO:0042802">
    <property type="term" value="F:identical protein binding"/>
    <property type="evidence" value="ECO:0000353"/>
    <property type="project" value="UniProtKB"/>
</dbReference>
<dbReference type="GO" id="GO:0061629">
    <property type="term" value="F:RNA polymerase II-specific DNA-binding transcription factor binding"/>
    <property type="evidence" value="ECO:0000353"/>
    <property type="project" value="BHF-UCL"/>
</dbReference>
<dbReference type="GO" id="GO:0000122">
    <property type="term" value="P:negative regulation of transcription by RNA polymerase II"/>
    <property type="evidence" value="ECO:0000250"/>
    <property type="project" value="UniProtKB"/>
</dbReference>
<dbReference type="GO" id="GO:0030182">
    <property type="term" value="P:neuron differentiation"/>
    <property type="evidence" value="ECO:0000250"/>
    <property type="project" value="UniProtKB"/>
</dbReference>
<dbReference type="GO" id="GO:0045893">
    <property type="term" value="P:positive regulation of DNA-templated transcription"/>
    <property type="evidence" value="ECO:0000314"/>
    <property type="project" value="BHF-UCL"/>
</dbReference>
<dbReference type="FunFam" id="3.40.1390.30:FF:000001">
    <property type="entry name" value="GTP cyclohydrolase 1 type 2"/>
    <property type="match status" value="1"/>
</dbReference>
<dbReference type="FunFam" id="3.40.1390.30:FF:000004">
    <property type="entry name" value="NIF3-like protein 1"/>
    <property type="match status" value="1"/>
</dbReference>
<dbReference type="Gene3D" id="3.40.1390.30">
    <property type="entry name" value="NIF3 (NGG1p interacting factor 3)-like"/>
    <property type="match status" value="2"/>
</dbReference>
<dbReference type="InterPro" id="IPR002678">
    <property type="entry name" value="DUF34/NIF3"/>
</dbReference>
<dbReference type="InterPro" id="IPR017222">
    <property type="entry name" value="DUF34/NIF3_animal"/>
</dbReference>
<dbReference type="InterPro" id="IPR036069">
    <property type="entry name" value="DUF34/NIF3_sf"/>
</dbReference>
<dbReference type="NCBIfam" id="TIGR00486">
    <property type="entry name" value="YbgI_SA1388"/>
    <property type="match status" value="1"/>
</dbReference>
<dbReference type="PANTHER" id="PTHR13799">
    <property type="entry name" value="NGG1 INTERACTING FACTOR 3"/>
    <property type="match status" value="1"/>
</dbReference>
<dbReference type="PANTHER" id="PTHR13799:SF13">
    <property type="entry name" value="NIF3-LIKE PROTEIN 1"/>
    <property type="match status" value="1"/>
</dbReference>
<dbReference type="Pfam" id="PF01784">
    <property type="entry name" value="DUF34_NIF3"/>
    <property type="match status" value="1"/>
</dbReference>
<dbReference type="PIRSF" id="PIRSF037490">
    <property type="entry name" value="UCP037490_NIF3_euk"/>
    <property type="match status" value="1"/>
</dbReference>
<dbReference type="SUPFAM" id="SSF102705">
    <property type="entry name" value="NIF3 (NGG1p interacting factor 3)-like"/>
    <property type="match status" value="1"/>
</dbReference>